<protein>
    <recommendedName>
        <fullName evidence="6">Germacrene A acid 8-beta-hydroxylase</fullName>
        <shortName evidence="6">HaG8H</shortName>
        <ecNumber evidence="4 5">1.14.14.168</ecNumber>
    </recommendedName>
    <alternativeName>
        <fullName evidence="6">Cytochrome P450 71BL1</fullName>
    </alternativeName>
</protein>
<feature type="chain" id="PRO_0000421930" description="Germacrene A acid 8-beta-hydroxylase">
    <location>
        <begin position="1"/>
        <end position="488"/>
    </location>
</feature>
<feature type="transmembrane region" description="Helical; Signal-anchor for type II membrane protein" evidence="2">
    <location>
        <begin position="2"/>
        <end position="22"/>
    </location>
</feature>
<feature type="binding site" description="axial binding residue" evidence="1">
    <location>
        <position position="429"/>
    </location>
    <ligand>
        <name>heme</name>
        <dbReference type="ChEBI" id="CHEBI:30413"/>
    </ligand>
    <ligandPart>
        <name>Fe</name>
        <dbReference type="ChEBI" id="CHEBI:18248"/>
    </ligandPart>
</feature>
<feature type="glycosylation site" description="N-linked (GlcNAc...) asparagine" evidence="3">
    <location>
        <position position="407"/>
    </location>
</feature>
<name>C7BL1_HELAN</name>
<keyword id="KW-0325">Glycoprotein</keyword>
<keyword id="KW-0349">Heme</keyword>
<keyword id="KW-0408">Iron</keyword>
<keyword id="KW-0472">Membrane</keyword>
<keyword id="KW-0479">Metal-binding</keyword>
<keyword id="KW-0503">Monooxygenase</keyword>
<keyword id="KW-0560">Oxidoreductase</keyword>
<keyword id="KW-0735">Signal-anchor</keyword>
<keyword id="KW-0812">Transmembrane</keyword>
<keyword id="KW-1133">Transmembrane helix</keyword>
<comment type="function">
    <text evidence="4 5 7">Involved in the biosynthesis of germacrene-derived sesquiterpene lactones (PubMed:30468448). Hydroxylates germacrene A acid to 8-beta-hydroxy-germacrene A acid (PubMed:21515683, PubMed:29758164). Unlike 6-alpha-hydroxy-germacrene A acid, this compound cannot undergo spontaneous lactonization (PubMed:21515683, PubMed:29758164).</text>
</comment>
<comment type="catalytic activity">
    <reaction evidence="4 5">
        <text>germacra-1(10),4,11(13)-trien-12-oate + reduced [NADPH--hemoprotein reductase] + O2 = 8beta-hydroxygermacra-1(10),4,11(13)-trien-12-oate + oxidized [NADPH--hemoprotein reductase] + H2O + H(+)</text>
        <dbReference type="Rhea" id="RHEA:57964"/>
        <dbReference type="Rhea" id="RHEA-COMP:11964"/>
        <dbReference type="Rhea" id="RHEA-COMP:11965"/>
        <dbReference type="ChEBI" id="CHEBI:15377"/>
        <dbReference type="ChEBI" id="CHEBI:15378"/>
        <dbReference type="ChEBI" id="CHEBI:15379"/>
        <dbReference type="ChEBI" id="CHEBI:57618"/>
        <dbReference type="ChEBI" id="CHEBI:58210"/>
        <dbReference type="ChEBI" id="CHEBI:61301"/>
        <dbReference type="ChEBI" id="CHEBI:142464"/>
        <dbReference type="EC" id="1.14.14.168"/>
    </reaction>
    <physiologicalReaction direction="left-to-right" evidence="4 5">
        <dbReference type="Rhea" id="RHEA:57965"/>
    </physiologicalReaction>
</comment>
<comment type="cofactor">
    <cofactor evidence="1">
        <name>heme</name>
        <dbReference type="ChEBI" id="CHEBI:30413"/>
    </cofactor>
</comment>
<comment type="pathway">
    <text evidence="5 7">Secondary metabolite biosynthesis; terpenoid biosynthesis.</text>
</comment>
<comment type="subcellular location">
    <subcellularLocation>
        <location evidence="2">Membrane</location>
        <topology evidence="2">Single-pass type II membrane protein</topology>
    </subcellularLocation>
</comment>
<comment type="tissue specificity">
    <text evidence="5">Expressed in leaf primordia.</text>
</comment>
<comment type="developmental stage">
    <text evidence="5">In developing leaves, expressed at very low levels in young leaf primordia, but strongly induced after the fourth and fifth days following leaf primordia initiation.</text>
</comment>
<comment type="similarity">
    <text evidence="8">Belongs to the cytochrome P450 family.</text>
</comment>
<gene>
    <name evidence="6" type="primary">CYP71BL1</name>
    <name type="synonym">C12</name>
    <name evidence="6" type="synonym">G8H</name>
</gene>
<organism>
    <name type="scientific">Helianthus annuus</name>
    <name type="common">Common sunflower</name>
    <dbReference type="NCBI Taxonomy" id="4232"/>
    <lineage>
        <taxon>Eukaryota</taxon>
        <taxon>Viridiplantae</taxon>
        <taxon>Streptophyta</taxon>
        <taxon>Embryophyta</taxon>
        <taxon>Tracheophyta</taxon>
        <taxon>Spermatophyta</taxon>
        <taxon>Magnoliopsida</taxon>
        <taxon>eudicotyledons</taxon>
        <taxon>Gunneridae</taxon>
        <taxon>Pentapetalae</taxon>
        <taxon>asterids</taxon>
        <taxon>campanulids</taxon>
        <taxon>Asterales</taxon>
        <taxon>Asteraceae</taxon>
        <taxon>Asteroideae</taxon>
        <taxon>Heliantheae alliance</taxon>
        <taxon>Heliantheae</taxon>
        <taxon>Helianthus</taxon>
    </lineage>
</organism>
<sequence length="488" mass="55803">MELFTIFSIVVSSLILFTFWSLKVPKNLPPGPPKLPIIGNIHLLDKIAPHRNLRNLARKYGPIMHLRLGQVSTVVISSPRLAHEIMKTQDLSFADRPTTTTSQIFFYKASNIAWARYGNYWRQMKKICTLELLSAKKSRSFFYIREEELTRTYKFLDFSSGTPITLRDTIQEMVNNVVSRATLGDVSEDRQFIIDSTYTMLKSFNSFNLFNYYPSLSFINVISGKQAQWLKMHKEVDVILEKILREHRSRPRGKNDHEDLVDVLIRIKETGDLDMAITDDNIKAIILEMLTAGTSSSSMTIEWAFTEMMRNPKIMKKAQTEVRSVVKGDRVTEADIQNLDYTKLVIKETLRLHGVPILVPRENQEDCVVNGYDIPAKTRLLVNAWACATDPDSWEDPDSFIPERFENNSIGYSGADFEFIPFGAGRRICPGMNFGMGTVEYVVANLLLHYDWKLPDGMKPHDIDMREITGISTLPIHPLKIVPISLSK</sequence>
<reference key="1">
    <citation type="journal article" date="2011" name="J. Biol. Chem.">
        <title>Lettuce costunolide synthase (CYP71BL2) and its homolog (CYP71BL1) from sunflower catalyze distinct regio- and stereoselective hydroxylations in sesquiterpene lactone metabolism.</title>
        <authorList>
            <person name="Ikezawa N."/>
            <person name="Gopfert J.C."/>
            <person name="Nguyen D.T."/>
            <person name="Kim S.U."/>
            <person name="O'Maille P.E."/>
            <person name="Spring O."/>
            <person name="Ro D.K."/>
        </authorList>
    </citation>
    <scope>NUCLEOTIDE SEQUENCE [MRNA]</scope>
    <scope>FUNCTION</scope>
    <scope>CATALYTIC ACTIVITY</scope>
    <scope>3D-STRUCTURE MODELING</scope>
    <source>
        <strain>cv. HA300</strain>
    </source>
</reference>
<reference key="2">
    <citation type="journal article" date="2019" name="Nat. Prod. Rep.">
        <title>Non-volatile natural products in plant glandular trichomes: chemistry, biological activities and biosynthesis.</title>
        <authorList>
            <person name="Liu Y."/>
            <person name="Jing S.-X."/>
            <person name="Luo S.-H."/>
            <person name="Li S.-H."/>
        </authorList>
    </citation>
    <scope>PATHWAY</scope>
    <scope>REVIEW</scope>
</reference>
<reference key="3">
    <citation type="journal article" date="2018" name="ACS Chem. Biol.">
        <title>Biosynthesis of eupatolide-A metabolic route for sesquiterpene lactone formation involving the P450 enzyme CYP71DD6.</title>
        <authorList>
            <person name="Frey M."/>
            <person name="Schmauder K."/>
            <person name="Pateraki I."/>
            <person name="Spring O."/>
        </authorList>
    </citation>
    <scope>FUNCTION</scope>
    <scope>CATALYTIC ACTIVITY</scope>
    <scope>PATHWAY</scope>
    <scope>DEVELOPMENTAL STAGE</scope>
    <scope>TISSUE SPECIFICITY</scope>
</reference>
<accession>F8S1H3</accession>
<dbReference type="EC" id="1.14.14.168" evidence="4 5"/>
<dbReference type="EMBL" id="HQ439590">
    <property type="protein sequence ID" value="AEI59773.1"/>
    <property type="molecule type" value="mRNA"/>
</dbReference>
<dbReference type="SMR" id="F8S1H3"/>
<dbReference type="GlyCosmos" id="F8S1H3">
    <property type="glycosylation" value="1 site, No reported glycans"/>
</dbReference>
<dbReference type="EnsemblPlants" id="mRNA:HanXRQr2_Chr04g0180561">
    <property type="protein sequence ID" value="mRNA:HanXRQr2_Chr04g0180561"/>
    <property type="gene ID" value="HanXRQr2_Chr04g0180561"/>
</dbReference>
<dbReference type="Gramene" id="mRNA:HanXRQr2_Chr04g0180561">
    <property type="protein sequence ID" value="mRNA:HanXRQr2_Chr04g0180561"/>
    <property type="gene ID" value="HanXRQr2_Chr04g0180561"/>
</dbReference>
<dbReference type="KEGG" id="ag:AEI59773"/>
<dbReference type="OMA" id="EASYICA"/>
<dbReference type="OrthoDB" id="2789670at2759"/>
<dbReference type="BioCyc" id="MetaCyc:MONOMER-18648"/>
<dbReference type="BRENDA" id="1.14.14.168">
    <property type="organism ID" value="2597"/>
</dbReference>
<dbReference type="UniPathway" id="UPA00213"/>
<dbReference type="GO" id="GO:0016020">
    <property type="term" value="C:membrane"/>
    <property type="evidence" value="ECO:0007669"/>
    <property type="project" value="UniProtKB-SubCell"/>
</dbReference>
<dbReference type="GO" id="GO:0102614">
    <property type="term" value="F:germacrene A acid 8beta-hydroxylase activity"/>
    <property type="evidence" value="ECO:0000314"/>
    <property type="project" value="UniProtKB"/>
</dbReference>
<dbReference type="GO" id="GO:0020037">
    <property type="term" value="F:heme binding"/>
    <property type="evidence" value="ECO:0007669"/>
    <property type="project" value="InterPro"/>
</dbReference>
<dbReference type="GO" id="GO:0005506">
    <property type="term" value="F:iron ion binding"/>
    <property type="evidence" value="ECO:0007669"/>
    <property type="project" value="InterPro"/>
</dbReference>
<dbReference type="GO" id="GO:0051762">
    <property type="term" value="P:sesquiterpene biosynthetic process"/>
    <property type="evidence" value="ECO:0000314"/>
    <property type="project" value="UniProtKB"/>
</dbReference>
<dbReference type="GO" id="GO:0016114">
    <property type="term" value="P:terpenoid biosynthetic process"/>
    <property type="evidence" value="ECO:0007669"/>
    <property type="project" value="UniProtKB-UniPathway"/>
</dbReference>
<dbReference type="CDD" id="cd11072">
    <property type="entry name" value="CYP71-like"/>
    <property type="match status" value="1"/>
</dbReference>
<dbReference type="FunFam" id="1.10.630.10:FF:000043">
    <property type="entry name" value="Cytochrome P450 99A2"/>
    <property type="match status" value="1"/>
</dbReference>
<dbReference type="Gene3D" id="1.10.630.10">
    <property type="entry name" value="Cytochrome P450"/>
    <property type="match status" value="1"/>
</dbReference>
<dbReference type="InterPro" id="IPR001128">
    <property type="entry name" value="Cyt_P450"/>
</dbReference>
<dbReference type="InterPro" id="IPR017972">
    <property type="entry name" value="Cyt_P450_CS"/>
</dbReference>
<dbReference type="InterPro" id="IPR002401">
    <property type="entry name" value="Cyt_P450_E_grp-I"/>
</dbReference>
<dbReference type="InterPro" id="IPR036396">
    <property type="entry name" value="Cyt_P450_sf"/>
</dbReference>
<dbReference type="PANTHER" id="PTHR47955:SF13">
    <property type="entry name" value="CYTOCHROME P450"/>
    <property type="match status" value="1"/>
</dbReference>
<dbReference type="PANTHER" id="PTHR47955">
    <property type="entry name" value="CYTOCHROME P450 FAMILY 71 PROTEIN"/>
    <property type="match status" value="1"/>
</dbReference>
<dbReference type="Pfam" id="PF00067">
    <property type="entry name" value="p450"/>
    <property type="match status" value="1"/>
</dbReference>
<dbReference type="PRINTS" id="PR00463">
    <property type="entry name" value="EP450I"/>
</dbReference>
<dbReference type="PRINTS" id="PR00385">
    <property type="entry name" value="P450"/>
</dbReference>
<dbReference type="SUPFAM" id="SSF48264">
    <property type="entry name" value="Cytochrome P450"/>
    <property type="match status" value="1"/>
</dbReference>
<dbReference type="PROSITE" id="PS00086">
    <property type="entry name" value="CYTOCHROME_P450"/>
    <property type="match status" value="1"/>
</dbReference>
<proteinExistence type="evidence at protein level"/>
<evidence type="ECO:0000250" key="1">
    <source>
        <dbReference type="UniProtKB" id="P04798"/>
    </source>
</evidence>
<evidence type="ECO:0000255" key="2"/>
<evidence type="ECO:0000255" key="3">
    <source>
        <dbReference type="PROSITE-ProRule" id="PRU00498"/>
    </source>
</evidence>
<evidence type="ECO:0000269" key="4">
    <source>
    </source>
</evidence>
<evidence type="ECO:0000269" key="5">
    <source>
    </source>
</evidence>
<evidence type="ECO:0000303" key="6">
    <source>
    </source>
</evidence>
<evidence type="ECO:0000303" key="7">
    <source>
    </source>
</evidence>
<evidence type="ECO:0000305" key="8"/>